<comment type="function">
    <text evidence="1">Binds 16S rRNA, required for the assembly of 30S particles.</text>
</comment>
<comment type="subunit">
    <text evidence="1">Part of the 30S ribosomal subunit.</text>
</comment>
<comment type="subcellular location">
    <subcellularLocation>
        <location>Plastid</location>
        <location>Chloroplast</location>
    </subcellularLocation>
</comment>
<comment type="similarity">
    <text evidence="1">Belongs to the universal ribosomal protein uS14 family.</text>
</comment>
<sequence>MARKGLIEREKKRKKLEQKYHSIRGSSKKEIRKVPSLSDKWEIHGKLQSPPRNSAPVRLHRRCFLTGRPRANYRDFGLSGHVLREMVQACLLPGATRSSW</sequence>
<accession>Q3V536</accession>
<dbReference type="EMBL" id="AJ879453">
    <property type="protein sequence ID" value="CAI53792.1"/>
    <property type="molecule type" value="Genomic_DNA"/>
</dbReference>
<dbReference type="RefSeq" id="YP_319763.1">
    <property type="nucleotide sequence ID" value="NC_007407.1"/>
</dbReference>
<dbReference type="SMR" id="Q3V536"/>
<dbReference type="GeneID" id="3677454"/>
<dbReference type="GO" id="GO:0009507">
    <property type="term" value="C:chloroplast"/>
    <property type="evidence" value="ECO:0007669"/>
    <property type="project" value="UniProtKB-SubCell"/>
</dbReference>
<dbReference type="GO" id="GO:0015935">
    <property type="term" value="C:small ribosomal subunit"/>
    <property type="evidence" value="ECO:0007669"/>
    <property type="project" value="TreeGrafter"/>
</dbReference>
<dbReference type="GO" id="GO:0019843">
    <property type="term" value="F:rRNA binding"/>
    <property type="evidence" value="ECO:0007669"/>
    <property type="project" value="UniProtKB-UniRule"/>
</dbReference>
<dbReference type="GO" id="GO:0003735">
    <property type="term" value="F:structural constituent of ribosome"/>
    <property type="evidence" value="ECO:0007669"/>
    <property type="project" value="InterPro"/>
</dbReference>
<dbReference type="GO" id="GO:0006412">
    <property type="term" value="P:translation"/>
    <property type="evidence" value="ECO:0007669"/>
    <property type="project" value="UniProtKB-UniRule"/>
</dbReference>
<dbReference type="FunFam" id="1.10.287.1480:FF:000001">
    <property type="entry name" value="30S ribosomal protein S14"/>
    <property type="match status" value="1"/>
</dbReference>
<dbReference type="Gene3D" id="1.10.287.1480">
    <property type="match status" value="1"/>
</dbReference>
<dbReference type="HAMAP" id="MF_00537">
    <property type="entry name" value="Ribosomal_uS14_1"/>
    <property type="match status" value="1"/>
</dbReference>
<dbReference type="InterPro" id="IPR001209">
    <property type="entry name" value="Ribosomal_uS14"/>
</dbReference>
<dbReference type="InterPro" id="IPR023036">
    <property type="entry name" value="Ribosomal_uS14_bac/plastid"/>
</dbReference>
<dbReference type="InterPro" id="IPR018271">
    <property type="entry name" value="Ribosomal_uS14_CS"/>
</dbReference>
<dbReference type="NCBIfam" id="NF006477">
    <property type="entry name" value="PRK08881.1"/>
    <property type="match status" value="1"/>
</dbReference>
<dbReference type="PANTHER" id="PTHR19836">
    <property type="entry name" value="30S RIBOSOMAL PROTEIN S14"/>
    <property type="match status" value="1"/>
</dbReference>
<dbReference type="PANTHER" id="PTHR19836:SF19">
    <property type="entry name" value="SMALL RIBOSOMAL SUBUNIT PROTEIN US14M"/>
    <property type="match status" value="1"/>
</dbReference>
<dbReference type="Pfam" id="PF00253">
    <property type="entry name" value="Ribosomal_S14"/>
    <property type="match status" value="1"/>
</dbReference>
<dbReference type="SUPFAM" id="SSF57716">
    <property type="entry name" value="Glucocorticoid receptor-like (DNA-binding domain)"/>
    <property type="match status" value="1"/>
</dbReference>
<dbReference type="PROSITE" id="PS00527">
    <property type="entry name" value="RIBOSOMAL_S14"/>
    <property type="match status" value="1"/>
</dbReference>
<gene>
    <name evidence="1" type="primary">rps14</name>
</gene>
<reference key="1">
    <citation type="journal article" date="2005" name="Mol. Biol. Evol.">
        <title>Analysis of Acorus calamus chloroplast genome and its phylogenetic implications.</title>
        <authorList>
            <person name="Goremykin V.V."/>
            <person name="Holland B."/>
            <person name="Hirsch-Ernst K.I."/>
            <person name="Hellwig F.H."/>
        </authorList>
    </citation>
    <scope>NUCLEOTIDE SEQUENCE [LARGE SCALE GENOMIC DNA]</scope>
</reference>
<keyword id="KW-0150">Chloroplast</keyword>
<keyword id="KW-0934">Plastid</keyword>
<keyword id="KW-0687">Ribonucleoprotein</keyword>
<keyword id="KW-0689">Ribosomal protein</keyword>
<keyword id="KW-0694">RNA-binding</keyword>
<keyword id="KW-0699">rRNA-binding</keyword>
<name>RR14_ACOCL</name>
<evidence type="ECO:0000255" key="1">
    <source>
        <dbReference type="HAMAP-Rule" id="MF_00537"/>
    </source>
</evidence>
<evidence type="ECO:0000256" key="2">
    <source>
        <dbReference type="SAM" id="MobiDB-lite"/>
    </source>
</evidence>
<evidence type="ECO:0000305" key="3"/>
<feature type="chain" id="PRO_0000354394" description="Small ribosomal subunit protein uS14c">
    <location>
        <begin position="1"/>
        <end position="100"/>
    </location>
</feature>
<feature type="region of interest" description="Disordered" evidence="2">
    <location>
        <begin position="1"/>
        <end position="29"/>
    </location>
</feature>
<feature type="compositionally biased region" description="Basic and acidic residues" evidence="2">
    <location>
        <begin position="1"/>
        <end position="10"/>
    </location>
</feature>
<protein>
    <recommendedName>
        <fullName evidence="1">Small ribosomal subunit protein uS14c</fullName>
    </recommendedName>
    <alternativeName>
        <fullName evidence="3">30S ribosomal protein S14, chloroplastic</fullName>
    </alternativeName>
</protein>
<geneLocation type="chloroplast"/>
<proteinExistence type="inferred from homology"/>
<organism>
    <name type="scientific">Acorus calamus</name>
    <name type="common">Sweet flag</name>
    <dbReference type="NCBI Taxonomy" id="4465"/>
    <lineage>
        <taxon>Eukaryota</taxon>
        <taxon>Viridiplantae</taxon>
        <taxon>Streptophyta</taxon>
        <taxon>Embryophyta</taxon>
        <taxon>Tracheophyta</taxon>
        <taxon>Spermatophyta</taxon>
        <taxon>Magnoliopsida</taxon>
        <taxon>Liliopsida</taxon>
        <taxon>Acoraceae</taxon>
        <taxon>Acorus</taxon>
    </lineage>
</organism>